<accession>A5MZ55</accession>
<organism>
    <name type="scientific">Clostridium kluyveri (strain ATCC 8527 / DSM 555 / NBRC 12016 / NCIMB 10680 / K1)</name>
    <dbReference type="NCBI Taxonomy" id="431943"/>
    <lineage>
        <taxon>Bacteria</taxon>
        <taxon>Bacillati</taxon>
        <taxon>Bacillota</taxon>
        <taxon>Clostridia</taxon>
        <taxon>Eubacteriales</taxon>
        <taxon>Clostridiaceae</taxon>
        <taxon>Clostridium</taxon>
    </lineage>
</organism>
<proteinExistence type="inferred from homology"/>
<evidence type="ECO:0000255" key="1">
    <source>
        <dbReference type="HAMAP-Rule" id="MF_00033"/>
    </source>
</evidence>
<dbReference type="EC" id="2.4.1.227" evidence="1"/>
<dbReference type="EMBL" id="CP000673">
    <property type="protein sequence ID" value="EDK34151.1"/>
    <property type="molecule type" value="Genomic_DNA"/>
</dbReference>
<dbReference type="RefSeq" id="WP_012102478.1">
    <property type="nucleotide sequence ID" value="NC_009706.1"/>
</dbReference>
<dbReference type="SMR" id="A5MZ55"/>
<dbReference type="STRING" id="431943.CKL_2139"/>
<dbReference type="CAZy" id="GT28">
    <property type="family name" value="Glycosyltransferase Family 28"/>
</dbReference>
<dbReference type="KEGG" id="ckl:CKL_2139"/>
<dbReference type="eggNOG" id="COG0707">
    <property type="taxonomic scope" value="Bacteria"/>
</dbReference>
<dbReference type="HOGENOM" id="CLU_037404_0_0_9"/>
<dbReference type="UniPathway" id="UPA00219"/>
<dbReference type="Proteomes" id="UP000002411">
    <property type="component" value="Chromosome"/>
</dbReference>
<dbReference type="GO" id="GO:0005886">
    <property type="term" value="C:plasma membrane"/>
    <property type="evidence" value="ECO:0007669"/>
    <property type="project" value="UniProtKB-SubCell"/>
</dbReference>
<dbReference type="GO" id="GO:0051991">
    <property type="term" value="F:UDP-N-acetyl-D-glucosamine:N-acetylmuramoyl-L-alanyl-D-glutamyl-meso-2,6-diaminopimelyl-D-alanyl-D-alanine-diphosphoundecaprenol 4-beta-N-acetylglucosaminlytransferase activity"/>
    <property type="evidence" value="ECO:0007669"/>
    <property type="project" value="RHEA"/>
</dbReference>
<dbReference type="GO" id="GO:0050511">
    <property type="term" value="F:undecaprenyldiphospho-muramoylpentapeptide beta-N-acetylglucosaminyltransferase activity"/>
    <property type="evidence" value="ECO:0007669"/>
    <property type="project" value="UniProtKB-UniRule"/>
</dbReference>
<dbReference type="GO" id="GO:0005975">
    <property type="term" value="P:carbohydrate metabolic process"/>
    <property type="evidence" value="ECO:0007669"/>
    <property type="project" value="InterPro"/>
</dbReference>
<dbReference type="GO" id="GO:0051301">
    <property type="term" value="P:cell division"/>
    <property type="evidence" value="ECO:0007669"/>
    <property type="project" value="UniProtKB-KW"/>
</dbReference>
<dbReference type="GO" id="GO:0071555">
    <property type="term" value="P:cell wall organization"/>
    <property type="evidence" value="ECO:0007669"/>
    <property type="project" value="UniProtKB-KW"/>
</dbReference>
<dbReference type="GO" id="GO:0030259">
    <property type="term" value="P:lipid glycosylation"/>
    <property type="evidence" value="ECO:0007669"/>
    <property type="project" value="UniProtKB-UniRule"/>
</dbReference>
<dbReference type="GO" id="GO:0009252">
    <property type="term" value="P:peptidoglycan biosynthetic process"/>
    <property type="evidence" value="ECO:0007669"/>
    <property type="project" value="UniProtKB-UniRule"/>
</dbReference>
<dbReference type="GO" id="GO:0008360">
    <property type="term" value="P:regulation of cell shape"/>
    <property type="evidence" value="ECO:0007669"/>
    <property type="project" value="UniProtKB-KW"/>
</dbReference>
<dbReference type="CDD" id="cd03785">
    <property type="entry name" value="GT28_MurG"/>
    <property type="match status" value="1"/>
</dbReference>
<dbReference type="Gene3D" id="3.40.50.2000">
    <property type="entry name" value="Glycogen Phosphorylase B"/>
    <property type="match status" value="2"/>
</dbReference>
<dbReference type="HAMAP" id="MF_00033">
    <property type="entry name" value="MurG"/>
    <property type="match status" value="1"/>
</dbReference>
<dbReference type="InterPro" id="IPR006009">
    <property type="entry name" value="GlcNAc_MurG"/>
</dbReference>
<dbReference type="InterPro" id="IPR007235">
    <property type="entry name" value="Glyco_trans_28_C"/>
</dbReference>
<dbReference type="InterPro" id="IPR004276">
    <property type="entry name" value="GlycoTrans_28_N"/>
</dbReference>
<dbReference type="NCBIfam" id="TIGR01133">
    <property type="entry name" value="murG"/>
    <property type="match status" value="1"/>
</dbReference>
<dbReference type="NCBIfam" id="NF009102">
    <property type="entry name" value="PRK12446.1"/>
    <property type="match status" value="1"/>
</dbReference>
<dbReference type="PANTHER" id="PTHR21015:SF27">
    <property type="entry name" value="UDP-N-ACETYLGLUCOSAMINE--N-ACETYLMURAMYL-(PENTAPEPTIDE) PYROPHOSPHORYL-UNDECAPRENOL N-ACETYLGLUCOSAMINE TRANSFERASE"/>
    <property type="match status" value="1"/>
</dbReference>
<dbReference type="PANTHER" id="PTHR21015">
    <property type="entry name" value="UDP-N-ACETYLGLUCOSAMINE--N-ACETYLMURAMYL-(PENTAPEPTIDE) PYROPHOSPHORYL-UNDECAPRENOL N-ACETYLGLUCOSAMINE TRANSFERASE 1"/>
    <property type="match status" value="1"/>
</dbReference>
<dbReference type="Pfam" id="PF04101">
    <property type="entry name" value="Glyco_tran_28_C"/>
    <property type="match status" value="1"/>
</dbReference>
<dbReference type="Pfam" id="PF03033">
    <property type="entry name" value="Glyco_transf_28"/>
    <property type="match status" value="1"/>
</dbReference>
<dbReference type="SUPFAM" id="SSF53756">
    <property type="entry name" value="UDP-Glycosyltransferase/glycogen phosphorylase"/>
    <property type="match status" value="1"/>
</dbReference>
<comment type="function">
    <text evidence="1">Cell wall formation. Catalyzes the transfer of a GlcNAc subunit on undecaprenyl-pyrophosphoryl-MurNAc-pentapeptide (lipid intermediate I) to form undecaprenyl-pyrophosphoryl-MurNAc-(pentapeptide)GlcNAc (lipid intermediate II).</text>
</comment>
<comment type="catalytic activity">
    <reaction evidence="1">
        <text>di-trans,octa-cis-undecaprenyl diphospho-N-acetyl-alpha-D-muramoyl-L-alanyl-D-glutamyl-meso-2,6-diaminopimeloyl-D-alanyl-D-alanine + UDP-N-acetyl-alpha-D-glucosamine = di-trans,octa-cis-undecaprenyl diphospho-[N-acetyl-alpha-D-glucosaminyl-(1-&gt;4)]-N-acetyl-alpha-D-muramoyl-L-alanyl-D-glutamyl-meso-2,6-diaminopimeloyl-D-alanyl-D-alanine + UDP + H(+)</text>
        <dbReference type="Rhea" id="RHEA:31227"/>
        <dbReference type="ChEBI" id="CHEBI:15378"/>
        <dbReference type="ChEBI" id="CHEBI:57705"/>
        <dbReference type="ChEBI" id="CHEBI:58223"/>
        <dbReference type="ChEBI" id="CHEBI:61387"/>
        <dbReference type="ChEBI" id="CHEBI:61388"/>
        <dbReference type="EC" id="2.4.1.227"/>
    </reaction>
</comment>
<comment type="pathway">
    <text evidence="1">Cell wall biogenesis; peptidoglycan biosynthesis.</text>
</comment>
<comment type="subcellular location">
    <subcellularLocation>
        <location evidence="1">Cell membrane</location>
        <topology evidence="1">Peripheral membrane protein</topology>
        <orientation evidence="1">Cytoplasmic side</orientation>
    </subcellularLocation>
</comment>
<comment type="similarity">
    <text evidence="1">Belongs to the glycosyltransferase 28 family. MurG subfamily.</text>
</comment>
<reference key="1">
    <citation type="journal article" date="2008" name="Proc. Natl. Acad. Sci. U.S.A.">
        <title>The genome of Clostridium kluyveri, a strict anaerobe with unique metabolic features.</title>
        <authorList>
            <person name="Seedorf H."/>
            <person name="Fricke W.F."/>
            <person name="Veith B."/>
            <person name="Brueggemann H."/>
            <person name="Liesegang H."/>
            <person name="Strittmatter A."/>
            <person name="Miethke M."/>
            <person name="Buckel W."/>
            <person name="Hinderberger J."/>
            <person name="Li F."/>
            <person name="Hagemeier C."/>
            <person name="Thauer R.K."/>
            <person name="Gottschalk G."/>
        </authorList>
    </citation>
    <scope>NUCLEOTIDE SEQUENCE [LARGE SCALE GENOMIC DNA]</scope>
    <source>
        <strain>ATCC 8527 / DSM 555 / NBRC 12016 / NCIMB 10680 / K1</strain>
    </source>
</reference>
<sequence>MKKIILTGGGSAGHVTPNLALIPKLKELGYEIQYIGTESGIEREIIENEKIKYHVISSGKLRRYFDIKNFTDPFKVIKGIFQAIFIMRKEKPNVVFSKGGFVSVPVVFAAYINGIPVIAHESDITPGLANRLSSPYCTKVCVTFPESVKSIKGDNAVLTGTPIRQELLDGSRIIGRRMCGFQNDKPVLLIIGGSLGSKFINNTVRNCLNELLKIYNIIHICGKGNLEEKLTERNGYVQFEYVSEEMPHIMNAADIVISRAGANVIFELLALKKPNLLIPLSRKSSRGDQILNAASFEKSGYSMVLKEEDMTPKLLLDKLKKLDMSKHTYINKMKASAVQDATNKIINLIEKYK</sequence>
<feature type="chain" id="PRO_1000074452" description="UDP-N-acetylglucosamine--N-acetylmuramyl-(pentapeptide) pyrophosphoryl-undecaprenol N-acetylglucosamine transferase">
    <location>
        <begin position="1"/>
        <end position="353"/>
    </location>
</feature>
<feature type="binding site" evidence="1">
    <location>
        <begin position="11"/>
        <end position="13"/>
    </location>
    <ligand>
        <name>UDP-N-acetyl-alpha-D-glucosamine</name>
        <dbReference type="ChEBI" id="CHEBI:57705"/>
    </ligand>
</feature>
<feature type="binding site" evidence="1">
    <location>
        <position position="164"/>
    </location>
    <ligand>
        <name>UDP-N-acetyl-alpha-D-glucosamine</name>
        <dbReference type="ChEBI" id="CHEBI:57705"/>
    </ligand>
</feature>
<feature type="binding site" evidence="1">
    <location>
        <position position="194"/>
    </location>
    <ligand>
        <name>UDP-N-acetyl-alpha-D-glucosamine</name>
        <dbReference type="ChEBI" id="CHEBI:57705"/>
    </ligand>
</feature>
<feature type="binding site" evidence="1">
    <location>
        <position position="289"/>
    </location>
    <ligand>
        <name>UDP-N-acetyl-alpha-D-glucosamine</name>
        <dbReference type="ChEBI" id="CHEBI:57705"/>
    </ligand>
</feature>
<gene>
    <name evidence="1" type="primary">murG</name>
    <name type="ordered locus">CKL_2139</name>
</gene>
<name>MURG_CLOK5</name>
<keyword id="KW-0131">Cell cycle</keyword>
<keyword id="KW-0132">Cell division</keyword>
<keyword id="KW-1003">Cell membrane</keyword>
<keyword id="KW-0133">Cell shape</keyword>
<keyword id="KW-0961">Cell wall biogenesis/degradation</keyword>
<keyword id="KW-0328">Glycosyltransferase</keyword>
<keyword id="KW-0472">Membrane</keyword>
<keyword id="KW-0573">Peptidoglycan synthesis</keyword>
<keyword id="KW-1185">Reference proteome</keyword>
<keyword id="KW-0808">Transferase</keyword>
<protein>
    <recommendedName>
        <fullName evidence="1">UDP-N-acetylglucosamine--N-acetylmuramyl-(pentapeptide) pyrophosphoryl-undecaprenol N-acetylglucosamine transferase</fullName>
        <ecNumber evidence="1">2.4.1.227</ecNumber>
    </recommendedName>
    <alternativeName>
        <fullName evidence="1">Undecaprenyl-PP-MurNAc-pentapeptide-UDPGlcNAc GlcNAc transferase</fullName>
    </alternativeName>
</protein>